<name>RUVA_STAAR</name>
<sequence length="200" mass="22292">MYAYVKGKLTHLYPTHVVVETAGVGYEIQTPNSYRFQKHLDHEVLIHTSLIVREDAQLLYGFSSEEEKDMFLSLIKVTGIGPKSALAILATSTPNEVKRAIENENDTYLTKFPGIGKKTARQIVLDLKGKVKITEEDSDSLLQVDATSTEQDQFVQEAMLALEALGYSKRELAKVEKTLNKNKYDSVDEAVKAGLQLVVS</sequence>
<keyword id="KW-0963">Cytoplasm</keyword>
<keyword id="KW-0227">DNA damage</keyword>
<keyword id="KW-0233">DNA recombination</keyword>
<keyword id="KW-0234">DNA repair</keyword>
<keyword id="KW-0238">DNA-binding</keyword>
<organism>
    <name type="scientific">Staphylococcus aureus (strain MRSA252)</name>
    <dbReference type="NCBI Taxonomy" id="282458"/>
    <lineage>
        <taxon>Bacteria</taxon>
        <taxon>Bacillati</taxon>
        <taxon>Bacillota</taxon>
        <taxon>Bacilli</taxon>
        <taxon>Bacillales</taxon>
        <taxon>Staphylococcaceae</taxon>
        <taxon>Staphylococcus</taxon>
    </lineage>
</organism>
<dbReference type="EMBL" id="BX571856">
    <property type="protein sequence ID" value="CAG40713.1"/>
    <property type="molecule type" value="Genomic_DNA"/>
</dbReference>
<dbReference type="RefSeq" id="WP_000271546.1">
    <property type="nucleotide sequence ID" value="NC_002952.2"/>
</dbReference>
<dbReference type="SMR" id="Q6GG62"/>
<dbReference type="KEGG" id="sar:SAR1722"/>
<dbReference type="HOGENOM" id="CLU_087936_1_0_9"/>
<dbReference type="Proteomes" id="UP000000596">
    <property type="component" value="Chromosome"/>
</dbReference>
<dbReference type="GO" id="GO:0005737">
    <property type="term" value="C:cytoplasm"/>
    <property type="evidence" value="ECO:0007669"/>
    <property type="project" value="UniProtKB-SubCell"/>
</dbReference>
<dbReference type="GO" id="GO:0009379">
    <property type="term" value="C:Holliday junction helicase complex"/>
    <property type="evidence" value="ECO:0007669"/>
    <property type="project" value="InterPro"/>
</dbReference>
<dbReference type="GO" id="GO:0048476">
    <property type="term" value="C:Holliday junction resolvase complex"/>
    <property type="evidence" value="ECO:0007669"/>
    <property type="project" value="UniProtKB-UniRule"/>
</dbReference>
<dbReference type="GO" id="GO:0005524">
    <property type="term" value="F:ATP binding"/>
    <property type="evidence" value="ECO:0007669"/>
    <property type="project" value="InterPro"/>
</dbReference>
<dbReference type="GO" id="GO:0000400">
    <property type="term" value="F:four-way junction DNA binding"/>
    <property type="evidence" value="ECO:0007669"/>
    <property type="project" value="UniProtKB-UniRule"/>
</dbReference>
<dbReference type="GO" id="GO:0009378">
    <property type="term" value="F:four-way junction helicase activity"/>
    <property type="evidence" value="ECO:0007669"/>
    <property type="project" value="InterPro"/>
</dbReference>
<dbReference type="GO" id="GO:0006310">
    <property type="term" value="P:DNA recombination"/>
    <property type="evidence" value="ECO:0007669"/>
    <property type="project" value="UniProtKB-UniRule"/>
</dbReference>
<dbReference type="GO" id="GO:0006281">
    <property type="term" value="P:DNA repair"/>
    <property type="evidence" value="ECO:0007669"/>
    <property type="project" value="UniProtKB-UniRule"/>
</dbReference>
<dbReference type="CDD" id="cd14332">
    <property type="entry name" value="UBA_RuvA_C"/>
    <property type="match status" value="1"/>
</dbReference>
<dbReference type="Gene3D" id="1.10.150.20">
    <property type="entry name" value="5' to 3' exonuclease, C-terminal subdomain"/>
    <property type="match status" value="1"/>
</dbReference>
<dbReference type="Gene3D" id="1.10.8.10">
    <property type="entry name" value="DNA helicase RuvA subunit, C-terminal domain"/>
    <property type="match status" value="1"/>
</dbReference>
<dbReference type="Gene3D" id="2.40.50.140">
    <property type="entry name" value="Nucleic acid-binding proteins"/>
    <property type="match status" value="1"/>
</dbReference>
<dbReference type="HAMAP" id="MF_00031">
    <property type="entry name" value="DNA_HJ_migration_RuvA"/>
    <property type="match status" value="1"/>
</dbReference>
<dbReference type="InterPro" id="IPR013849">
    <property type="entry name" value="DNA_helicase_Holl-junc_RuvA_I"/>
</dbReference>
<dbReference type="InterPro" id="IPR003583">
    <property type="entry name" value="Hlx-hairpin-Hlx_DNA-bd_motif"/>
</dbReference>
<dbReference type="InterPro" id="IPR012340">
    <property type="entry name" value="NA-bd_OB-fold"/>
</dbReference>
<dbReference type="InterPro" id="IPR000085">
    <property type="entry name" value="RuvA"/>
</dbReference>
<dbReference type="InterPro" id="IPR010994">
    <property type="entry name" value="RuvA_2-like"/>
</dbReference>
<dbReference type="InterPro" id="IPR011114">
    <property type="entry name" value="RuvA_C"/>
</dbReference>
<dbReference type="InterPro" id="IPR036267">
    <property type="entry name" value="RuvA_C_sf"/>
</dbReference>
<dbReference type="NCBIfam" id="TIGR00084">
    <property type="entry name" value="ruvA"/>
    <property type="match status" value="1"/>
</dbReference>
<dbReference type="Pfam" id="PF14520">
    <property type="entry name" value="HHH_5"/>
    <property type="match status" value="1"/>
</dbReference>
<dbReference type="Pfam" id="PF07499">
    <property type="entry name" value="RuvA_C"/>
    <property type="match status" value="1"/>
</dbReference>
<dbReference type="Pfam" id="PF01330">
    <property type="entry name" value="RuvA_N"/>
    <property type="match status" value="1"/>
</dbReference>
<dbReference type="SMART" id="SM00278">
    <property type="entry name" value="HhH1"/>
    <property type="match status" value="2"/>
</dbReference>
<dbReference type="SUPFAM" id="SSF46929">
    <property type="entry name" value="DNA helicase RuvA subunit, C-terminal domain"/>
    <property type="match status" value="1"/>
</dbReference>
<dbReference type="SUPFAM" id="SSF50249">
    <property type="entry name" value="Nucleic acid-binding proteins"/>
    <property type="match status" value="1"/>
</dbReference>
<dbReference type="SUPFAM" id="SSF47781">
    <property type="entry name" value="RuvA domain 2-like"/>
    <property type="match status" value="1"/>
</dbReference>
<evidence type="ECO:0000255" key="1">
    <source>
        <dbReference type="HAMAP-Rule" id="MF_00031"/>
    </source>
</evidence>
<proteinExistence type="inferred from homology"/>
<feature type="chain" id="PRO_0000094681" description="Holliday junction branch migration complex subunit RuvA">
    <location>
        <begin position="1"/>
        <end position="200"/>
    </location>
</feature>
<feature type="region of interest" description="Domain I" evidence="1">
    <location>
        <begin position="1"/>
        <end position="63"/>
    </location>
</feature>
<feature type="region of interest" description="Domain II" evidence="1">
    <location>
        <begin position="64"/>
        <end position="142"/>
    </location>
</feature>
<feature type="region of interest" description="Flexible linker" evidence="1">
    <location>
        <begin position="143"/>
        <end position="149"/>
    </location>
</feature>
<feature type="region of interest" description="Domain III" evidence="1">
    <location>
        <begin position="150"/>
        <end position="200"/>
    </location>
</feature>
<comment type="function">
    <text evidence="1">The RuvA-RuvB-RuvC complex processes Holliday junction (HJ) DNA during genetic recombination and DNA repair, while the RuvA-RuvB complex plays an important role in the rescue of blocked DNA replication forks via replication fork reversal (RFR). RuvA specifically binds to HJ cruciform DNA, conferring on it an open structure. The RuvB hexamer acts as an ATP-dependent pump, pulling dsDNA into and through the RuvAB complex. HJ branch migration allows RuvC to scan DNA until it finds its consensus sequence, where it cleaves and resolves the cruciform DNA.</text>
</comment>
<comment type="subunit">
    <text evidence="1">Homotetramer. Forms an RuvA(8)-RuvB(12)-Holliday junction (HJ) complex. HJ DNA is sandwiched between 2 RuvA tetramers; dsDNA enters through RuvA and exits via RuvB. An RuvB hexamer assembles on each DNA strand where it exits the tetramer. Each RuvB hexamer is contacted by two RuvA subunits (via domain III) on 2 adjacent RuvB subunits; this complex drives branch migration. In the full resolvosome a probable DNA-RuvA(4)-RuvB(12)-RuvC(2) complex forms which resolves the HJ.</text>
</comment>
<comment type="subcellular location">
    <subcellularLocation>
        <location evidence="1">Cytoplasm</location>
    </subcellularLocation>
</comment>
<comment type="domain">
    <text evidence="1">Has three domains with a flexible linker between the domains II and III and assumes an 'L' shape. Domain III is highly mobile and contacts RuvB.</text>
</comment>
<comment type="similarity">
    <text evidence="1">Belongs to the RuvA family.</text>
</comment>
<protein>
    <recommendedName>
        <fullName evidence="1">Holliday junction branch migration complex subunit RuvA</fullName>
    </recommendedName>
</protein>
<gene>
    <name evidence="1" type="primary">ruvA</name>
    <name type="ordered locus">SAR1722</name>
</gene>
<reference key="1">
    <citation type="journal article" date="2004" name="Proc. Natl. Acad. Sci. U.S.A.">
        <title>Complete genomes of two clinical Staphylococcus aureus strains: evidence for the rapid evolution of virulence and drug resistance.</title>
        <authorList>
            <person name="Holden M.T.G."/>
            <person name="Feil E.J."/>
            <person name="Lindsay J.A."/>
            <person name="Peacock S.J."/>
            <person name="Day N.P.J."/>
            <person name="Enright M.C."/>
            <person name="Foster T.J."/>
            <person name="Moore C.E."/>
            <person name="Hurst L."/>
            <person name="Atkin R."/>
            <person name="Barron A."/>
            <person name="Bason N."/>
            <person name="Bentley S.D."/>
            <person name="Chillingworth C."/>
            <person name="Chillingworth T."/>
            <person name="Churcher C."/>
            <person name="Clark L."/>
            <person name="Corton C."/>
            <person name="Cronin A."/>
            <person name="Doggett J."/>
            <person name="Dowd L."/>
            <person name="Feltwell T."/>
            <person name="Hance Z."/>
            <person name="Harris B."/>
            <person name="Hauser H."/>
            <person name="Holroyd S."/>
            <person name="Jagels K."/>
            <person name="James K.D."/>
            <person name="Lennard N."/>
            <person name="Line A."/>
            <person name="Mayes R."/>
            <person name="Moule S."/>
            <person name="Mungall K."/>
            <person name="Ormond D."/>
            <person name="Quail M.A."/>
            <person name="Rabbinowitsch E."/>
            <person name="Rutherford K.M."/>
            <person name="Sanders M."/>
            <person name="Sharp S."/>
            <person name="Simmonds M."/>
            <person name="Stevens K."/>
            <person name="Whitehead S."/>
            <person name="Barrell B.G."/>
            <person name="Spratt B.G."/>
            <person name="Parkhill J."/>
        </authorList>
    </citation>
    <scope>NUCLEOTIDE SEQUENCE [LARGE SCALE GENOMIC DNA]</scope>
    <source>
        <strain>MRSA252</strain>
    </source>
</reference>
<accession>Q6GG62</accession>